<dbReference type="EMBL" id="DQ489735">
    <property type="protein sequence ID" value="ABF48257.1"/>
    <property type="molecule type" value="mRNA"/>
</dbReference>
<dbReference type="EMBL" id="AK056896">
    <property type="protein sequence ID" value="BAB71304.1"/>
    <property type="molecule type" value="mRNA"/>
</dbReference>
<dbReference type="EMBL" id="BC020841">
    <property type="protein sequence ID" value="AAH20841.1"/>
    <property type="molecule type" value="mRNA"/>
</dbReference>
<dbReference type="EMBL" id="BC029819">
    <property type="protein sequence ID" value="AAH29819.1"/>
    <property type="molecule type" value="mRNA"/>
</dbReference>
<dbReference type="CCDS" id="CCDS10119.1">
    <molecule id="Q1HG43-2"/>
</dbReference>
<dbReference type="CCDS" id="CCDS61619.1">
    <molecule id="Q1HG43-3"/>
</dbReference>
<dbReference type="CCDS" id="CCDS61621.1">
    <molecule id="Q1HG43-1"/>
</dbReference>
<dbReference type="RefSeq" id="NP_001263193.1">
    <molecule id="Q1HG43-2"/>
    <property type="nucleotide sequence ID" value="NM_001276264.2"/>
</dbReference>
<dbReference type="RefSeq" id="NP_001263194.1">
    <property type="nucleotide sequence ID" value="NM_001276265.1"/>
</dbReference>
<dbReference type="RefSeq" id="NP_001263195.1">
    <molecule id="Q1HG43-1"/>
    <property type="nucleotide sequence ID" value="NM_001276266.2"/>
</dbReference>
<dbReference type="RefSeq" id="NP_001263196.1">
    <molecule id="Q1HG43-3"/>
    <property type="nucleotide sequence ID" value="NM_001276267.2"/>
</dbReference>
<dbReference type="RefSeq" id="NP_001263197.1">
    <molecule id="Q1HG43-3"/>
    <property type="nucleotide sequence ID" value="NM_001276268.2"/>
</dbReference>
<dbReference type="RefSeq" id="NP_001371278.1">
    <molecule id="Q1HG43-3"/>
    <property type="nucleotide sequence ID" value="NM_001384349.1"/>
</dbReference>
<dbReference type="RefSeq" id="NP_653166.2">
    <molecule id="Q1HG43-2"/>
    <property type="nucleotide sequence ID" value="NM_144565.3"/>
</dbReference>
<dbReference type="RefSeq" id="XP_006720806.1">
    <molecule id="Q1HG43-1"/>
    <property type="nucleotide sequence ID" value="XM_006720743.4"/>
</dbReference>
<dbReference type="RefSeq" id="XP_006720808.1">
    <molecule id="Q1HG43-1"/>
    <property type="nucleotide sequence ID" value="XM_006720745.2"/>
</dbReference>
<dbReference type="RefSeq" id="XP_006720809.1">
    <molecule id="Q1HG43-1"/>
    <property type="nucleotide sequence ID" value="XM_006720746.2"/>
</dbReference>
<dbReference type="RefSeq" id="XP_006720810.1">
    <molecule id="Q1HG43-1"/>
    <property type="nucleotide sequence ID" value="XM_006720747.4"/>
</dbReference>
<dbReference type="RefSeq" id="XP_006720812.1">
    <property type="nucleotide sequence ID" value="XM_006720749.1"/>
</dbReference>
<dbReference type="RefSeq" id="XP_006720814.1">
    <molecule id="Q1HG43-1"/>
    <property type="nucleotide sequence ID" value="XM_006720751.4"/>
</dbReference>
<dbReference type="RefSeq" id="XP_006720815.3">
    <molecule id="Q1HG43-1"/>
    <property type="nucleotide sequence ID" value="XM_006720752.4"/>
</dbReference>
<dbReference type="RefSeq" id="XP_006720817.1">
    <property type="nucleotide sequence ID" value="XM_006720754.1"/>
</dbReference>
<dbReference type="RefSeq" id="XP_006720818.1">
    <property type="nucleotide sequence ID" value="XM_006720755.1"/>
</dbReference>
<dbReference type="RefSeq" id="XP_011520483.1">
    <molecule id="Q1HG43-1"/>
    <property type="nucleotide sequence ID" value="XM_011522181.3"/>
</dbReference>
<dbReference type="RefSeq" id="XP_011520484.1">
    <property type="nucleotide sequence ID" value="XM_011522182.1"/>
</dbReference>
<dbReference type="RefSeq" id="XP_011520485.1">
    <molecule id="Q1HG43-1"/>
    <property type="nucleotide sequence ID" value="XM_011522183.3"/>
</dbReference>
<dbReference type="RefSeq" id="XP_047289244.1">
    <molecule id="Q1HG43-1"/>
    <property type="nucleotide sequence ID" value="XM_047433288.1"/>
</dbReference>
<dbReference type="RefSeq" id="XP_047289245.1">
    <molecule id="Q1HG43-3"/>
    <property type="nucleotide sequence ID" value="XM_047433289.1"/>
</dbReference>
<dbReference type="RefSeq" id="XP_047289246.1">
    <molecule id="Q1HG43-1"/>
    <property type="nucleotide sequence ID" value="XM_047433290.1"/>
</dbReference>
<dbReference type="RefSeq" id="XP_047289248.1">
    <molecule id="Q1HG43-1"/>
    <property type="nucleotide sequence ID" value="XM_047433292.1"/>
</dbReference>
<dbReference type="RefSeq" id="XP_047289249.1">
    <molecule id="Q1HG43-1"/>
    <property type="nucleotide sequence ID" value="XM_047433293.1"/>
</dbReference>
<dbReference type="RefSeq" id="XP_054235103.1">
    <molecule id="Q1HG43-1"/>
    <property type="nucleotide sequence ID" value="XM_054379128.1"/>
</dbReference>
<dbReference type="RefSeq" id="XP_054235104.1">
    <molecule id="Q1HG43-1"/>
    <property type="nucleotide sequence ID" value="XM_054379129.1"/>
</dbReference>
<dbReference type="RefSeq" id="XP_054235105.1">
    <molecule id="Q1HG43-3"/>
    <property type="nucleotide sequence ID" value="XM_054379130.1"/>
</dbReference>
<dbReference type="RefSeq" id="XP_054235106.1">
    <molecule id="Q1HG43-1"/>
    <property type="nucleotide sequence ID" value="XM_054379131.1"/>
</dbReference>
<dbReference type="RefSeq" id="XP_054235107.1">
    <molecule id="Q1HG43-1"/>
    <property type="nucleotide sequence ID" value="XM_054379132.1"/>
</dbReference>
<dbReference type="RefSeq" id="XP_054235108.1">
    <molecule id="Q1HG43-1"/>
    <property type="nucleotide sequence ID" value="XM_054379133.1"/>
</dbReference>
<dbReference type="RefSeq" id="XP_054235109.1">
    <molecule id="Q1HG43-1"/>
    <property type="nucleotide sequence ID" value="XM_054379134.1"/>
</dbReference>
<dbReference type="RefSeq" id="XP_054235110.1">
    <molecule id="Q1HG43-1"/>
    <property type="nucleotide sequence ID" value="XM_054379135.1"/>
</dbReference>
<dbReference type="RefSeq" id="XP_054235111.1">
    <molecule id="Q1HG43-1"/>
    <property type="nucleotide sequence ID" value="XM_054379136.1"/>
</dbReference>
<dbReference type="RefSeq" id="XP_054235112.1">
    <molecule id="Q1HG43-1"/>
    <property type="nucleotide sequence ID" value="XM_054379137.1"/>
</dbReference>
<dbReference type="RefSeq" id="XP_054235113.1">
    <molecule id="Q1HG43-1"/>
    <property type="nucleotide sequence ID" value="XM_054379138.1"/>
</dbReference>
<dbReference type="RefSeq" id="XP_054235114.1">
    <molecule id="Q1HG43-1"/>
    <property type="nucleotide sequence ID" value="XM_054379139.1"/>
</dbReference>
<dbReference type="PDB" id="7D3E">
    <property type="method" value="EM"/>
    <property type="resolution" value="2.80 A"/>
    <property type="chains" value="B/D=1-330"/>
</dbReference>
<dbReference type="PDB" id="7D3F">
    <property type="method" value="EM"/>
    <property type="resolution" value="2.30 A"/>
    <property type="chains" value="B/D=1-330"/>
</dbReference>
<dbReference type="PDBsum" id="7D3E"/>
<dbReference type="PDBsum" id="7D3F"/>
<dbReference type="EMDB" id="EMD-30555"/>
<dbReference type="EMDB" id="EMD-30556"/>
<dbReference type="SMR" id="Q1HG43"/>
<dbReference type="BioGRID" id="124731">
    <property type="interactions" value="10"/>
</dbReference>
<dbReference type="ComplexPortal" id="CPX-8183">
    <property type="entry name" value="DUOX1-DUOXA1 dual oxidase complex"/>
</dbReference>
<dbReference type="FunCoup" id="Q1HG43">
    <property type="interactions" value="104"/>
</dbReference>
<dbReference type="IntAct" id="Q1HG43">
    <property type="interactions" value="1"/>
</dbReference>
<dbReference type="STRING" id="9606.ENSP00000267803"/>
<dbReference type="GlyCosmos" id="Q1HG43">
    <property type="glycosylation" value="3 sites, No reported glycans"/>
</dbReference>
<dbReference type="GlyGen" id="Q1HG43">
    <property type="glycosylation" value="3 sites"/>
</dbReference>
<dbReference type="iPTMnet" id="Q1HG43"/>
<dbReference type="PhosphoSitePlus" id="Q1HG43"/>
<dbReference type="BioMuta" id="DUOXA1"/>
<dbReference type="DMDM" id="119368662"/>
<dbReference type="jPOST" id="Q1HG43"/>
<dbReference type="MassIVE" id="Q1HG43"/>
<dbReference type="PaxDb" id="9606-ENSP00000267803"/>
<dbReference type="PeptideAtlas" id="Q1HG43"/>
<dbReference type="ProteomicsDB" id="61213">
    <molecule id="Q1HG43-1"/>
</dbReference>
<dbReference type="ProteomicsDB" id="61214">
    <molecule id="Q1HG43-2"/>
</dbReference>
<dbReference type="ProteomicsDB" id="61215">
    <molecule id="Q1HG43-3"/>
</dbReference>
<dbReference type="Antibodypedia" id="24331">
    <property type="antibodies" value="78 antibodies from 13 providers"/>
</dbReference>
<dbReference type="DNASU" id="90527"/>
<dbReference type="Ensembl" id="ENST00000267803.8">
    <molecule id="Q1HG43-2"/>
    <property type="protein sequence ID" value="ENSP00000267803.4"/>
    <property type="gene ID" value="ENSG00000140254.13"/>
</dbReference>
<dbReference type="Ensembl" id="ENST00000558422.5">
    <molecule id="Q1HG43-3"/>
    <property type="protein sequence ID" value="ENSP00000453836.1"/>
    <property type="gene ID" value="ENSG00000140254.13"/>
</dbReference>
<dbReference type="Ensembl" id="ENST00000558996.5">
    <molecule id="Q1HG43-3"/>
    <property type="protein sequence ID" value="ENSP00000454019.1"/>
    <property type="gene ID" value="ENSG00000140254.13"/>
</dbReference>
<dbReference type="Ensembl" id="ENST00000559014.5">
    <molecule id="Q1HG43-2"/>
    <property type="protein sequence ID" value="ENSP00000453569.1"/>
    <property type="gene ID" value="ENSG00000140254.13"/>
</dbReference>
<dbReference type="Ensembl" id="ENST00000560572.6">
    <molecule id="Q1HG43-1"/>
    <property type="protein sequence ID" value="ENSP00000454084.1"/>
    <property type="gene ID" value="ENSG00000140254.13"/>
</dbReference>
<dbReference type="GeneID" id="90527"/>
<dbReference type="KEGG" id="hsa:90527"/>
<dbReference type="MANE-Select" id="ENST00000560572.6">
    <property type="protein sequence ID" value="ENSP00000454084.1"/>
    <property type="RefSeq nucleotide sequence ID" value="NM_001276266.2"/>
    <property type="RefSeq protein sequence ID" value="NP_001263195.1"/>
</dbReference>
<dbReference type="UCSC" id="uc001zup.5">
    <molecule id="Q1HG43-1"/>
    <property type="organism name" value="human"/>
</dbReference>
<dbReference type="AGR" id="HGNC:26507"/>
<dbReference type="CTD" id="90527"/>
<dbReference type="DisGeNET" id="90527"/>
<dbReference type="GeneCards" id="DUOXA1"/>
<dbReference type="HGNC" id="HGNC:26507">
    <property type="gene designation" value="DUOXA1"/>
</dbReference>
<dbReference type="HPA" id="ENSG00000140254">
    <property type="expression patterns" value="Tissue enhanced (esophagus, thyroid gland)"/>
</dbReference>
<dbReference type="MalaCards" id="DUOXA1"/>
<dbReference type="MIM" id="612771">
    <property type="type" value="gene"/>
</dbReference>
<dbReference type="neXtProt" id="NX_Q1HG43"/>
<dbReference type="OpenTargets" id="ENSG00000140254"/>
<dbReference type="PharmGKB" id="PA145008497"/>
<dbReference type="VEuPathDB" id="HostDB:ENSG00000140254"/>
<dbReference type="eggNOG" id="KOG3921">
    <property type="taxonomic scope" value="Eukaryota"/>
</dbReference>
<dbReference type="GeneTree" id="ENSGT00390000008240"/>
<dbReference type="HOGENOM" id="CLU_045258_1_0_1"/>
<dbReference type="InParanoid" id="Q1HG43"/>
<dbReference type="OMA" id="MHAFVIF"/>
<dbReference type="OrthoDB" id="10042652at2759"/>
<dbReference type="PAN-GO" id="Q1HG43">
    <property type="GO annotations" value="1 GO annotation based on evolutionary models"/>
</dbReference>
<dbReference type="PhylomeDB" id="Q1HG43"/>
<dbReference type="TreeFam" id="TF312996"/>
<dbReference type="PathwayCommons" id="Q1HG43"/>
<dbReference type="BioGRID-ORCS" id="90527">
    <property type="hits" value="14 hits in 1149 CRISPR screens"/>
</dbReference>
<dbReference type="ChiTaRS" id="DUOXA1">
    <property type="organism name" value="human"/>
</dbReference>
<dbReference type="GenomeRNAi" id="90527"/>
<dbReference type="Pharos" id="Q1HG43">
    <property type="development level" value="Tbio"/>
</dbReference>
<dbReference type="PRO" id="PR:Q1HG43"/>
<dbReference type="Proteomes" id="UP000005640">
    <property type="component" value="Chromosome 15"/>
</dbReference>
<dbReference type="RNAct" id="Q1HG43">
    <property type="molecule type" value="protein"/>
</dbReference>
<dbReference type="Bgee" id="ENSG00000140254">
    <property type="expression patterns" value="Expressed in lower esophagus mucosa and 127 other cell types or tissues"/>
</dbReference>
<dbReference type="ExpressionAtlas" id="Q1HG43">
    <property type="expression patterns" value="baseline and differential"/>
</dbReference>
<dbReference type="GO" id="GO:0031252">
    <property type="term" value="C:cell leading edge"/>
    <property type="evidence" value="ECO:0000316"/>
    <property type="project" value="UniProtKB"/>
</dbReference>
<dbReference type="GO" id="GO:0005783">
    <property type="term" value="C:endoplasmic reticulum"/>
    <property type="evidence" value="ECO:0000314"/>
    <property type="project" value="UniProtKB"/>
</dbReference>
<dbReference type="GO" id="GO:0005789">
    <property type="term" value="C:endoplasmic reticulum membrane"/>
    <property type="evidence" value="ECO:0007669"/>
    <property type="project" value="InterPro"/>
</dbReference>
<dbReference type="GO" id="GO:0016020">
    <property type="term" value="C:membrane"/>
    <property type="evidence" value="ECO:0000318"/>
    <property type="project" value="GO_Central"/>
</dbReference>
<dbReference type="GO" id="GO:0005886">
    <property type="term" value="C:plasma membrane"/>
    <property type="evidence" value="ECO:0000314"/>
    <property type="project" value="UniProtKB"/>
</dbReference>
<dbReference type="GO" id="GO:0019899">
    <property type="term" value="F:enzyme binding"/>
    <property type="evidence" value="ECO:0000353"/>
    <property type="project" value="UniProtKB"/>
</dbReference>
<dbReference type="GO" id="GO:0042743">
    <property type="term" value="P:hydrogen peroxide metabolic process"/>
    <property type="evidence" value="ECO:0007669"/>
    <property type="project" value="Ensembl"/>
</dbReference>
<dbReference type="GO" id="GO:0010729">
    <property type="term" value="P:positive regulation of hydrogen peroxide biosynthetic process"/>
    <property type="evidence" value="ECO:0000315"/>
    <property type="project" value="UniProtKB"/>
</dbReference>
<dbReference type="GO" id="GO:0045666">
    <property type="term" value="P:positive regulation of neuron differentiation"/>
    <property type="evidence" value="ECO:0007669"/>
    <property type="project" value="Ensembl"/>
</dbReference>
<dbReference type="GO" id="GO:0008104">
    <property type="term" value="P:protein localization"/>
    <property type="evidence" value="ECO:0000316"/>
    <property type="project" value="UniProtKB"/>
</dbReference>
<dbReference type="GO" id="GO:0015031">
    <property type="term" value="P:protein transport"/>
    <property type="evidence" value="ECO:0007669"/>
    <property type="project" value="UniProtKB-KW"/>
</dbReference>
<dbReference type="GO" id="GO:0050727">
    <property type="term" value="P:regulation of inflammatory response"/>
    <property type="evidence" value="ECO:0007669"/>
    <property type="project" value="Ensembl"/>
</dbReference>
<dbReference type="GO" id="GO:2000609">
    <property type="term" value="P:regulation of thyroid hormone generation"/>
    <property type="evidence" value="ECO:0007669"/>
    <property type="project" value="Ensembl"/>
</dbReference>
<dbReference type="InterPro" id="IPR018469">
    <property type="entry name" value="Dual_oxidase_maturation_fac"/>
</dbReference>
<dbReference type="PANTHER" id="PTHR31158">
    <property type="entry name" value="DUAL OXIDASE 2"/>
    <property type="match status" value="1"/>
</dbReference>
<dbReference type="PANTHER" id="PTHR31158:SF3">
    <property type="entry name" value="DUAL OXIDASE MATURATION FACTOR 1"/>
    <property type="match status" value="1"/>
</dbReference>
<dbReference type="Pfam" id="PF10204">
    <property type="entry name" value="DuoxA"/>
    <property type="match status" value="1"/>
</dbReference>
<name>DOXA1_HUMAN</name>
<keyword id="KW-0002">3D-structure</keyword>
<keyword id="KW-0025">Alternative splicing</keyword>
<keyword id="KW-0325">Glycoprotein</keyword>
<keyword id="KW-0472">Membrane</keyword>
<keyword id="KW-0653">Protein transport</keyword>
<keyword id="KW-1267">Proteomics identification</keyword>
<keyword id="KW-1185">Reference proteome</keyword>
<keyword id="KW-0812">Transmembrane</keyword>
<keyword id="KW-1133">Transmembrane helix</keyword>
<keyword id="KW-0813">Transport</keyword>
<organism>
    <name type="scientific">Homo sapiens</name>
    <name type="common">Human</name>
    <dbReference type="NCBI Taxonomy" id="9606"/>
    <lineage>
        <taxon>Eukaryota</taxon>
        <taxon>Metazoa</taxon>
        <taxon>Chordata</taxon>
        <taxon>Craniata</taxon>
        <taxon>Vertebrata</taxon>
        <taxon>Euteleostomi</taxon>
        <taxon>Mammalia</taxon>
        <taxon>Eutheria</taxon>
        <taxon>Euarchontoglires</taxon>
        <taxon>Primates</taxon>
        <taxon>Haplorrhini</taxon>
        <taxon>Catarrhini</taxon>
        <taxon>Hominidae</taxon>
        <taxon>Homo</taxon>
    </lineage>
</organism>
<evidence type="ECO:0000255" key="1"/>
<evidence type="ECO:0000256" key="2">
    <source>
        <dbReference type="SAM" id="MobiDB-lite"/>
    </source>
</evidence>
<evidence type="ECO:0000269" key="3">
    <source>
    </source>
</evidence>
<evidence type="ECO:0000303" key="4">
    <source>
    </source>
</evidence>
<evidence type="ECO:0000303" key="5">
    <source>
    </source>
</evidence>
<evidence type="ECO:0000305" key="6"/>
<evidence type="ECO:0000305" key="7">
    <source>
    </source>
</evidence>
<evidence type="ECO:0007829" key="8">
    <source>
        <dbReference type="PDB" id="7D3F"/>
    </source>
</evidence>
<protein>
    <recommendedName>
        <fullName>Dual oxidase maturation factor 1</fullName>
    </recommendedName>
    <alternativeName>
        <fullName>Dual oxidase activator 1</fullName>
    </alternativeName>
    <alternativeName>
        <fullName>Numb-interacting protein</fullName>
    </alternativeName>
</protein>
<accession>Q1HG43</accession>
<accession>Q8N6K9</accession>
<accession>Q96MI4</accession>
<reference key="1">
    <citation type="journal article" date="2006" name="J. Biol. Chem.">
        <title>Identification of the maturation factor for dual oxidase. Evolution of an eukaryotic operon equivalent.</title>
        <authorList>
            <person name="Grasberger H."/>
            <person name="Refetoff S."/>
        </authorList>
    </citation>
    <scope>NUCLEOTIDE SEQUENCE [MRNA] (ISOFORM 1)</scope>
    <scope>FUNCTION</scope>
    <scope>TISSUE SPECIFICITY</scope>
    <source>
        <tissue>Thyroid</tissue>
    </source>
</reference>
<reference key="2">
    <citation type="journal article" date="2004" name="Nat. Genet.">
        <title>Complete sequencing and characterization of 21,243 full-length human cDNAs.</title>
        <authorList>
            <person name="Ota T."/>
            <person name="Suzuki Y."/>
            <person name="Nishikawa T."/>
            <person name="Otsuki T."/>
            <person name="Sugiyama T."/>
            <person name="Irie R."/>
            <person name="Wakamatsu A."/>
            <person name="Hayashi K."/>
            <person name="Sato H."/>
            <person name="Nagai K."/>
            <person name="Kimura K."/>
            <person name="Makita H."/>
            <person name="Sekine M."/>
            <person name="Obayashi M."/>
            <person name="Nishi T."/>
            <person name="Shibahara T."/>
            <person name="Tanaka T."/>
            <person name="Ishii S."/>
            <person name="Yamamoto J."/>
            <person name="Saito K."/>
            <person name="Kawai Y."/>
            <person name="Isono Y."/>
            <person name="Nakamura Y."/>
            <person name="Nagahari K."/>
            <person name="Murakami K."/>
            <person name="Yasuda T."/>
            <person name="Iwayanagi T."/>
            <person name="Wagatsuma M."/>
            <person name="Shiratori A."/>
            <person name="Sudo H."/>
            <person name="Hosoiri T."/>
            <person name="Kaku Y."/>
            <person name="Kodaira H."/>
            <person name="Kondo H."/>
            <person name="Sugawara M."/>
            <person name="Takahashi M."/>
            <person name="Kanda K."/>
            <person name="Yokoi T."/>
            <person name="Furuya T."/>
            <person name="Kikkawa E."/>
            <person name="Omura Y."/>
            <person name="Abe K."/>
            <person name="Kamihara K."/>
            <person name="Katsuta N."/>
            <person name="Sato K."/>
            <person name="Tanikawa M."/>
            <person name="Yamazaki M."/>
            <person name="Ninomiya K."/>
            <person name="Ishibashi T."/>
            <person name="Yamashita H."/>
            <person name="Murakawa K."/>
            <person name="Fujimori K."/>
            <person name="Tanai H."/>
            <person name="Kimata M."/>
            <person name="Watanabe M."/>
            <person name="Hiraoka S."/>
            <person name="Chiba Y."/>
            <person name="Ishida S."/>
            <person name="Ono Y."/>
            <person name="Takiguchi S."/>
            <person name="Watanabe S."/>
            <person name="Yosida M."/>
            <person name="Hotuta T."/>
            <person name="Kusano J."/>
            <person name="Kanehori K."/>
            <person name="Takahashi-Fujii A."/>
            <person name="Hara H."/>
            <person name="Tanase T.-O."/>
            <person name="Nomura Y."/>
            <person name="Togiya S."/>
            <person name="Komai F."/>
            <person name="Hara R."/>
            <person name="Takeuchi K."/>
            <person name="Arita M."/>
            <person name="Imose N."/>
            <person name="Musashino K."/>
            <person name="Yuuki H."/>
            <person name="Oshima A."/>
            <person name="Sasaki N."/>
            <person name="Aotsuka S."/>
            <person name="Yoshikawa Y."/>
            <person name="Matsunawa H."/>
            <person name="Ichihara T."/>
            <person name="Shiohata N."/>
            <person name="Sano S."/>
            <person name="Moriya S."/>
            <person name="Momiyama H."/>
            <person name="Satoh N."/>
            <person name="Takami S."/>
            <person name="Terashima Y."/>
            <person name="Suzuki O."/>
            <person name="Nakagawa S."/>
            <person name="Senoh A."/>
            <person name="Mizoguchi H."/>
            <person name="Goto Y."/>
            <person name="Shimizu F."/>
            <person name="Wakebe H."/>
            <person name="Hishigaki H."/>
            <person name="Watanabe T."/>
            <person name="Sugiyama A."/>
            <person name="Takemoto M."/>
            <person name="Kawakami B."/>
            <person name="Yamazaki M."/>
            <person name="Watanabe K."/>
            <person name="Kumagai A."/>
            <person name="Itakura S."/>
            <person name="Fukuzumi Y."/>
            <person name="Fujimori Y."/>
            <person name="Komiyama M."/>
            <person name="Tashiro H."/>
            <person name="Tanigami A."/>
            <person name="Fujiwara T."/>
            <person name="Ono T."/>
            <person name="Yamada K."/>
            <person name="Fujii Y."/>
            <person name="Ozaki K."/>
            <person name="Hirao M."/>
            <person name="Ohmori Y."/>
            <person name="Kawabata A."/>
            <person name="Hikiji T."/>
            <person name="Kobatake N."/>
            <person name="Inagaki H."/>
            <person name="Ikema Y."/>
            <person name="Okamoto S."/>
            <person name="Okitani R."/>
            <person name="Kawakami T."/>
            <person name="Noguchi S."/>
            <person name="Itoh T."/>
            <person name="Shigeta K."/>
            <person name="Senba T."/>
            <person name="Matsumura K."/>
            <person name="Nakajima Y."/>
            <person name="Mizuno T."/>
            <person name="Morinaga M."/>
            <person name="Sasaki M."/>
            <person name="Togashi T."/>
            <person name="Oyama M."/>
            <person name="Hata H."/>
            <person name="Watanabe M."/>
            <person name="Komatsu T."/>
            <person name="Mizushima-Sugano J."/>
            <person name="Satoh T."/>
            <person name="Shirai Y."/>
            <person name="Takahashi Y."/>
            <person name="Nakagawa K."/>
            <person name="Okumura K."/>
            <person name="Nagase T."/>
            <person name="Nomura N."/>
            <person name="Kikuchi H."/>
            <person name="Masuho Y."/>
            <person name="Yamashita R."/>
            <person name="Nakai K."/>
            <person name="Yada T."/>
            <person name="Nakamura Y."/>
            <person name="Ohara O."/>
            <person name="Isogai T."/>
            <person name="Sugano S."/>
        </authorList>
    </citation>
    <scope>NUCLEOTIDE SEQUENCE [LARGE SCALE MRNA] (ISOFORM 3)</scope>
    <source>
        <tissue>Prostate</tissue>
    </source>
</reference>
<reference key="3">
    <citation type="journal article" date="2004" name="Genome Res.">
        <title>The status, quality, and expansion of the NIH full-length cDNA project: the Mammalian Gene Collection (MGC).</title>
        <authorList>
            <consortium name="The MGC Project Team"/>
        </authorList>
    </citation>
    <scope>NUCLEOTIDE SEQUENCE [LARGE SCALE MRNA] (ISOFORMS 2 AND 3)</scope>
    <source>
        <tissue>Brain</tissue>
        <tissue>Lung</tissue>
    </source>
</reference>
<reference key="4">
    <citation type="journal article" date="2004" name="J. Biol. Chem.">
        <title>A novel transmembrane protein recruits numb to the plasma membrane during asymmetric cell division.</title>
        <authorList>
            <person name="Qin H."/>
            <person name="Percival-Smith A."/>
            <person name="Li C."/>
            <person name="Jia C.Y.H."/>
            <person name="Gloor G."/>
            <person name="Li S.S.-C."/>
        </authorList>
    </citation>
    <scope>INTERACTION WITH NUMB</scope>
</reference>
<comment type="function">
    <text evidence="7">May be required for the maturation and the transport from the endoplasmic reticulum to the plasma membrane of functional DUOX1.</text>
</comment>
<comment type="subunit">
    <text>May interact with NUMB.</text>
</comment>
<comment type="interaction">
    <interactant intactId="EBI-46442099">
        <id>Q1HG43</id>
    </interactant>
    <interactant intactId="EBI-6677285">
        <id>Q9NRD9</id>
        <label>DUOX1</label>
    </interactant>
    <organismsDiffer>false</organismsDiffer>
    <experiments>4</experiments>
</comment>
<comment type="subcellular location">
    <subcellularLocation>
        <location evidence="6">Membrane</location>
        <topology evidence="6">Multi-pass membrane protein</topology>
    </subcellularLocation>
</comment>
<comment type="alternative products">
    <event type="alternative splicing"/>
    <isoform>
        <id>Q1HG43-1</id>
        <name>1</name>
        <sequence type="displayed"/>
    </isoform>
    <isoform>
        <id>Q1HG43-2</id>
        <name>2</name>
        <sequence type="described" ref="VSP_021891"/>
    </isoform>
    <isoform>
        <id>Q1HG43-3</id>
        <name>3</name>
        <sequence type="described" ref="VSP_021890"/>
    </isoform>
</comment>
<comment type="tissue specificity">
    <text evidence="3">Specifically expressed in thyroid gland. Also detected in esophagus.</text>
</comment>
<comment type="similarity">
    <text evidence="6">Belongs to the DUOXA family.</text>
</comment>
<gene>
    <name type="primary">DUOXA1</name>
    <name type="synonym">NIP</name>
    <name type="synonym">NUMBIP</name>
</gene>
<feature type="chain" id="PRO_0000264241" description="Dual oxidase maturation factor 1">
    <location>
        <begin position="1"/>
        <end position="343"/>
    </location>
</feature>
<feature type="topological domain" description="Extracellular" evidence="1">
    <location>
        <begin position="1"/>
        <end position="24"/>
    </location>
</feature>
<feature type="transmembrane region" description="Helical" evidence="1">
    <location>
        <begin position="25"/>
        <end position="45"/>
    </location>
</feature>
<feature type="topological domain" description="Cytoplasmic" evidence="1">
    <location>
        <begin position="46"/>
        <end position="51"/>
    </location>
</feature>
<feature type="transmembrane region" description="Helical" evidence="1">
    <location>
        <begin position="52"/>
        <end position="72"/>
    </location>
</feature>
<feature type="topological domain" description="Extracellular" evidence="1">
    <location>
        <begin position="73"/>
        <end position="183"/>
    </location>
</feature>
<feature type="transmembrane region" description="Helical" evidence="1">
    <location>
        <begin position="184"/>
        <end position="204"/>
    </location>
</feature>
<feature type="topological domain" description="Cytoplasmic" evidence="1">
    <location>
        <begin position="205"/>
        <end position="206"/>
    </location>
</feature>
<feature type="transmembrane region" description="Helical" evidence="1">
    <location>
        <begin position="207"/>
        <end position="227"/>
    </location>
</feature>
<feature type="topological domain" description="Extracellular" evidence="1">
    <location>
        <begin position="228"/>
        <end position="249"/>
    </location>
</feature>
<feature type="transmembrane region" description="Helical" evidence="1">
    <location>
        <begin position="250"/>
        <end position="270"/>
    </location>
</feature>
<feature type="topological domain" description="Cytoplasmic" evidence="1">
    <location>
        <begin position="271"/>
        <end position="343"/>
    </location>
</feature>
<feature type="region of interest" description="Disordered" evidence="2">
    <location>
        <begin position="306"/>
        <end position="343"/>
    </location>
</feature>
<feature type="compositionally biased region" description="Basic and acidic residues" evidence="2">
    <location>
        <begin position="330"/>
        <end position="343"/>
    </location>
</feature>
<feature type="glycosylation site" description="N-linked (GlcNAc...) asparagine" evidence="1">
    <location>
        <position position="84"/>
    </location>
</feature>
<feature type="glycosylation site" description="N-linked (GlcNAc...) asparagine" evidence="1">
    <location>
        <position position="109"/>
    </location>
</feature>
<feature type="glycosylation site" description="N-linked (GlcNAc...) asparagine" evidence="1">
    <location>
        <position position="121"/>
    </location>
</feature>
<feature type="splice variant" id="VSP_021890" description="In isoform 3." evidence="4 5">
    <location>
        <begin position="69"/>
        <end position="113"/>
    </location>
</feature>
<feature type="splice variant" id="VSP_021891" description="In isoform 2." evidence="5">
    <original>CKEAHPKDPDCAL</original>
    <variation>YRPRRLSLVPADVRGLAPAALSALPGALLAQAWRALLPGLRCPKAGKESRLGPPHSPWRFGPEGCEERWAEHTGDSPRPLRGRGTGRLWRWGSKERRACGVRAMLPRLVSNSGLKRPSCLDLPKCWDYRRDARAFFHLLEPTPCVTSRHTPLI</variation>
    <location>
        <begin position="331"/>
        <end position="343"/>
    </location>
</feature>
<feature type="sequence variant" id="VAR_057753" description="In dbSNP:rs34734975.">
    <original>P</original>
    <variation>L</variation>
    <location>
        <position position="19"/>
    </location>
</feature>
<feature type="sequence variant" id="VAR_029630" description="In dbSNP:rs16977686.">
    <original>S</original>
    <variation>G</variation>
    <location>
        <position position="313"/>
    </location>
</feature>
<feature type="strand" evidence="8">
    <location>
        <begin position="6"/>
        <end position="8"/>
    </location>
</feature>
<feature type="helix" evidence="8">
    <location>
        <begin position="22"/>
        <end position="41"/>
    </location>
</feature>
<feature type="helix" evidence="8">
    <location>
        <begin position="42"/>
        <end position="44"/>
    </location>
</feature>
<feature type="helix" evidence="8">
    <location>
        <begin position="50"/>
        <end position="72"/>
    </location>
</feature>
<feature type="strand" evidence="8">
    <location>
        <begin position="76"/>
        <end position="86"/>
    </location>
</feature>
<feature type="strand" evidence="8">
    <location>
        <begin position="94"/>
        <end position="103"/>
    </location>
</feature>
<feature type="strand" evidence="8">
    <location>
        <begin position="105"/>
        <end position="119"/>
    </location>
</feature>
<feature type="strand" evidence="8">
    <location>
        <begin position="122"/>
        <end position="131"/>
    </location>
</feature>
<feature type="helix" evidence="8">
    <location>
        <begin position="138"/>
        <end position="148"/>
    </location>
</feature>
<feature type="helix" evidence="8">
    <location>
        <begin position="152"/>
        <end position="160"/>
    </location>
</feature>
<feature type="strand" evidence="8">
    <location>
        <begin position="165"/>
        <end position="167"/>
    </location>
</feature>
<feature type="helix" evidence="8">
    <location>
        <begin position="169"/>
        <end position="199"/>
    </location>
</feature>
<feature type="helix" evidence="8">
    <location>
        <begin position="203"/>
        <end position="229"/>
    </location>
</feature>
<feature type="strand" evidence="8">
    <location>
        <begin position="236"/>
        <end position="238"/>
    </location>
</feature>
<feature type="strand" evidence="8">
    <location>
        <begin position="241"/>
        <end position="243"/>
    </location>
</feature>
<feature type="helix" evidence="8">
    <location>
        <begin position="249"/>
        <end position="274"/>
    </location>
</feature>
<sequence>MATLGHTFPFYAGPKPTFPMDTTLASIIMIFLTALATFIVILPGIRGKTRLFWLLRVVTSLFIGAAILAVNFSSEWSVGQVSTNTSYKAFSSEWISADIGLQVGLGGVNITLTGTPVQQLNETINYNEEFTWRLGENYAEEYAKALEKGLPDPVLYLAEKFTPRSPCGLYRQYRLAGHYTSAMLWVAFLCWLLANVMLSMPVLVYGGYMLLATGIFQLLALLFFSMATSLTSPCPLHLGASVLHTHHGPAFWITLTTGLLCVLLGLAMAVAHRMQPHRLKAFFNQSVDEDPMLEWSPEEGGLLSPRYRSMADSPKSQDIPLSEASSTKAYCKEAHPKDPDCAL</sequence>
<proteinExistence type="evidence at protein level"/>